<protein>
    <recommendedName>
        <fullName evidence="1">Small ribosomal subunit protein uS13</fullName>
    </recommendedName>
    <alternativeName>
        <fullName evidence="2">30S ribosomal protein S13</fullName>
    </alternativeName>
</protein>
<name>RS13_ORITI</name>
<dbReference type="EMBL" id="AP008981">
    <property type="protein sequence ID" value="BAG40524.1"/>
    <property type="molecule type" value="Genomic_DNA"/>
</dbReference>
<dbReference type="RefSeq" id="WP_012461627.1">
    <property type="nucleotide sequence ID" value="NC_010793.1"/>
</dbReference>
<dbReference type="SMR" id="B3CT27"/>
<dbReference type="GeneID" id="89459036"/>
<dbReference type="KEGG" id="ott:OTT_1066"/>
<dbReference type="HOGENOM" id="CLU_103849_1_2_5"/>
<dbReference type="OrthoDB" id="9803610at2"/>
<dbReference type="Proteomes" id="UP000001033">
    <property type="component" value="Chromosome"/>
</dbReference>
<dbReference type="GO" id="GO:0005829">
    <property type="term" value="C:cytosol"/>
    <property type="evidence" value="ECO:0007669"/>
    <property type="project" value="TreeGrafter"/>
</dbReference>
<dbReference type="GO" id="GO:0015935">
    <property type="term" value="C:small ribosomal subunit"/>
    <property type="evidence" value="ECO:0007669"/>
    <property type="project" value="TreeGrafter"/>
</dbReference>
<dbReference type="GO" id="GO:0019843">
    <property type="term" value="F:rRNA binding"/>
    <property type="evidence" value="ECO:0007669"/>
    <property type="project" value="UniProtKB-UniRule"/>
</dbReference>
<dbReference type="GO" id="GO:0003735">
    <property type="term" value="F:structural constituent of ribosome"/>
    <property type="evidence" value="ECO:0007669"/>
    <property type="project" value="InterPro"/>
</dbReference>
<dbReference type="GO" id="GO:0000049">
    <property type="term" value="F:tRNA binding"/>
    <property type="evidence" value="ECO:0007669"/>
    <property type="project" value="UniProtKB-UniRule"/>
</dbReference>
<dbReference type="GO" id="GO:0006412">
    <property type="term" value="P:translation"/>
    <property type="evidence" value="ECO:0007669"/>
    <property type="project" value="UniProtKB-UniRule"/>
</dbReference>
<dbReference type="FunFam" id="1.10.8.50:FF:000001">
    <property type="entry name" value="30S ribosomal protein S13"/>
    <property type="match status" value="1"/>
</dbReference>
<dbReference type="Gene3D" id="1.10.8.50">
    <property type="match status" value="1"/>
</dbReference>
<dbReference type="Gene3D" id="4.10.910.10">
    <property type="entry name" value="30s ribosomal protein s13, domain 2"/>
    <property type="match status" value="1"/>
</dbReference>
<dbReference type="HAMAP" id="MF_01315">
    <property type="entry name" value="Ribosomal_uS13"/>
    <property type="match status" value="1"/>
</dbReference>
<dbReference type="InterPro" id="IPR027437">
    <property type="entry name" value="Rbsml_uS13_C"/>
</dbReference>
<dbReference type="InterPro" id="IPR001892">
    <property type="entry name" value="Ribosomal_uS13"/>
</dbReference>
<dbReference type="InterPro" id="IPR010979">
    <property type="entry name" value="Ribosomal_uS13-like_H2TH"/>
</dbReference>
<dbReference type="InterPro" id="IPR019980">
    <property type="entry name" value="Ribosomal_uS13_bac-type"/>
</dbReference>
<dbReference type="InterPro" id="IPR018269">
    <property type="entry name" value="Ribosomal_uS13_CS"/>
</dbReference>
<dbReference type="NCBIfam" id="TIGR03631">
    <property type="entry name" value="uS13_bact"/>
    <property type="match status" value="1"/>
</dbReference>
<dbReference type="PANTHER" id="PTHR10871">
    <property type="entry name" value="30S RIBOSOMAL PROTEIN S13/40S RIBOSOMAL PROTEIN S18"/>
    <property type="match status" value="1"/>
</dbReference>
<dbReference type="PANTHER" id="PTHR10871:SF1">
    <property type="entry name" value="SMALL RIBOSOMAL SUBUNIT PROTEIN US13M"/>
    <property type="match status" value="1"/>
</dbReference>
<dbReference type="Pfam" id="PF00416">
    <property type="entry name" value="Ribosomal_S13"/>
    <property type="match status" value="1"/>
</dbReference>
<dbReference type="PIRSF" id="PIRSF002134">
    <property type="entry name" value="Ribosomal_S13"/>
    <property type="match status" value="1"/>
</dbReference>
<dbReference type="SUPFAM" id="SSF46946">
    <property type="entry name" value="S13-like H2TH domain"/>
    <property type="match status" value="1"/>
</dbReference>
<dbReference type="PROSITE" id="PS00646">
    <property type="entry name" value="RIBOSOMAL_S13_1"/>
    <property type="match status" value="1"/>
</dbReference>
<dbReference type="PROSITE" id="PS50159">
    <property type="entry name" value="RIBOSOMAL_S13_2"/>
    <property type="match status" value="1"/>
</dbReference>
<accession>B3CT27</accession>
<reference key="1">
    <citation type="journal article" date="2008" name="DNA Res.">
        <title>The whole-genome sequencing of the obligate intracellular bacterium Orientia tsutsugamushi revealed massive gene amplification during reductive genome evolution.</title>
        <authorList>
            <person name="Nakayama K."/>
            <person name="Yamashita A."/>
            <person name="Kurokawa K."/>
            <person name="Morimoto T."/>
            <person name="Ogawa M."/>
            <person name="Fukuhara M."/>
            <person name="Urakami H."/>
            <person name="Ohnishi M."/>
            <person name="Uchiyama I."/>
            <person name="Ogura Y."/>
            <person name="Ooka T."/>
            <person name="Oshima K."/>
            <person name="Tamura A."/>
            <person name="Hattori M."/>
            <person name="Hayashi T."/>
        </authorList>
    </citation>
    <scope>NUCLEOTIDE SEQUENCE [LARGE SCALE GENOMIC DNA]</scope>
    <source>
        <strain>Ikeda</strain>
    </source>
</reference>
<comment type="function">
    <text evidence="1">Located at the top of the head of the 30S subunit, it contacts several helices of the 16S rRNA. In the 70S ribosome it contacts the 23S rRNA (bridge B1a) and protein L5 of the 50S subunit (bridge B1b), connecting the 2 subunits; these bridges are implicated in subunit movement. Contacts the tRNAs in the A and P-sites.</text>
</comment>
<comment type="subunit">
    <text evidence="1">Part of the 30S ribosomal subunit. Forms a loose heterodimer with protein S19. Forms two bridges to the 50S subunit in the 70S ribosome.</text>
</comment>
<comment type="similarity">
    <text evidence="1">Belongs to the universal ribosomal protein uS13 family.</text>
</comment>
<gene>
    <name evidence="1" type="primary">rpsM</name>
    <name type="ordered locus">OTT_1066</name>
</gene>
<evidence type="ECO:0000255" key="1">
    <source>
        <dbReference type="HAMAP-Rule" id="MF_01315"/>
    </source>
</evidence>
<evidence type="ECO:0000305" key="2"/>
<keyword id="KW-0687">Ribonucleoprotein</keyword>
<keyword id="KW-0689">Ribosomal protein</keyword>
<keyword id="KW-0694">RNA-binding</keyword>
<keyword id="KW-0699">rRNA-binding</keyword>
<keyword id="KW-0820">tRNA-binding</keyword>
<proteinExistence type="inferred from homology"/>
<organism>
    <name type="scientific">Orientia tsutsugamushi (strain Ikeda)</name>
    <name type="common">Rickettsia tsutsugamushi</name>
    <dbReference type="NCBI Taxonomy" id="334380"/>
    <lineage>
        <taxon>Bacteria</taxon>
        <taxon>Pseudomonadati</taxon>
        <taxon>Pseudomonadota</taxon>
        <taxon>Alphaproteobacteria</taxon>
        <taxon>Rickettsiales</taxon>
        <taxon>Rickettsiaceae</taxon>
        <taxon>Rickettsieae</taxon>
        <taxon>Orientia</taxon>
    </lineage>
</organism>
<sequence length="125" mass="14225">MARISNVNVPTNKRVMIGLTYIYGIGRSTAQKICQEVQVSVNKKVKDLSNQELVALRSIIESKYKVEGDLRREINLNIKKKKDIRCYEGLRHIRKLPVRGQNTHSNARTRKGKAIAIAGKKKPNK</sequence>
<feature type="chain" id="PRO_1000141296" description="Small ribosomal subunit protein uS13">
    <location>
        <begin position="1"/>
        <end position="125"/>
    </location>
</feature>